<evidence type="ECO:0000255" key="1">
    <source>
        <dbReference type="HAMAP-Rule" id="MF_00022"/>
    </source>
</evidence>
<protein>
    <recommendedName>
        <fullName evidence="1">Glutamate--tRNA ligase 2</fullName>
        <ecNumber evidence="1">6.1.1.17</ecNumber>
    </recommendedName>
    <alternativeName>
        <fullName evidence="1">Glutamyl-tRNA synthetase 2</fullName>
        <shortName evidence="1">GluRS 2</shortName>
    </alternativeName>
</protein>
<proteinExistence type="inferred from homology"/>
<name>SYE2_PARM1</name>
<reference key="1">
    <citation type="journal article" date="2005" name="DNA Res.">
        <title>Complete genome sequence of the facultative anaerobic magnetotactic bacterium Magnetospirillum sp. strain AMB-1.</title>
        <authorList>
            <person name="Matsunaga T."/>
            <person name="Okamura Y."/>
            <person name="Fukuda Y."/>
            <person name="Wahyudi A.T."/>
            <person name="Murase Y."/>
            <person name="Takeyama H."/>
        </authorList>
    </citation>
    <scope>NUCLEOTIDE SEQUENCE [LARGE SCALE GENOMIC DNA]</scope>
    <source>
        <strain>ATCC 700264 / AMB-1</strain>
    </source>
</reference>
<dbReference type="EC" id="6.1.1.17" evidence="1"/>
<dbReference type="EMBL" id="AP007255">
    <property type="protein sequence ID" value="BAE51607.1"/>
    <property type="molecule type" value="Genomic_DNA"/>
</dbReference>
<dbReference type="RefSeq" id="WP_011385181.1">
    <property type="nucleotide sequence ID" value="NC_007626.1"/>
</dbReference>
<dbReference type="SMR" id="Q2W3G8"/>
<dbReference type="STRING" id="342108.amb2803"/>
<dbReference type="KEGG" id="mag:amb2803"/>
<dbReference type="HOGENOM" id="CLU_015768_6_0_5"/>
<dbReference type="OrthoDB" id="9807503at2"/>
<dbReference type="Proteomes" id="UP000007058">
    <property type="component" value="Chromosome"/>
</dbReference>
<dbReference type="GO" id="GO:0005829">
    <property type="term" value="C:cytosol"/>
    <property type="evidence" value="ECO:0007669"/>
    <property type="project" value="TreeGrafter"/>
</dbReference>
<dbReference type="GO" id="GO:0005524">
    <property type="term" value="F:ATP binding"/>
    <property type="evidence" value="ECO:0007669"/>
    <property type="project" value="UniProtKB-UniRule"/>
</dbReference>
<dbReference type="GO" id="GO:0004818">
    <property type="term" value="F:glutamate-tRNA ligase activity"/>
    <property type="evidence" value="ECO:0007669"/>
    <property type="project" value="UniProtKB-UniRule"/>
</dbReference>
<dbReference type="GO" id="GO:0000049">
    <property type="term" value="F:tRNA binding"/>
    <property type="evidence" value="ECO:0007669"/>
    <property type="project" value="InterPro"/>
</dbReference>
<dbReference type="GO" id="GO:0008270">
    <property type="term" value="F:zinc ion binding"/>
    <property type="evidence" value="ECO:0007669"/>
    <property type="project" value="InterPro"/>
</dbReference>
<dbReference type="GO" id="GO:0006424">
    <property type="term" value="P:glutamyl-tRNA aminoacylation"/>
    <property type="evidence" value="ECO:0007669"/>
    <property type="project" value="UniProtKB-UniRule"/>
</dbReference>
<dbReference type="CDD" id="cd00808">
    <property type="entry name" value="GluRS_core"/>
    <property type="match status" value="1"/>
</dbReference>
<dbReference type="FunFam" id="3.40.50.620:FF:000007">
    <property type="entry name" value="Glutamate--tRNA ligase"/>
    <property type="match status" value="1"/>
</dbReference>
<dbReference type="Gene3D" id="1.10.10.350">
    <property type="match status" value="1"/>
</dbReference>
<dbReference type="Gene3D" id="3.40.50.620">
    <property type="entry name" value="HUPs"/>
    <property type="match status" value="1"/>
</dbReference>
<dbReference type="HAMAP" id="MF_00022">
    <property type="entry name" value="Glu_tRNA_synth_type1"/>
    <property type="match status" value="1"/>
</dbReference>
<dbReference type="InterPro" id="IPR045462">
    <property type="entry name" value="aa-tRNA-synth_I_cd-bd"/>
</dbReference>
<dbReference type="InterPro" id="IPR020751">
    <property type="entry name" value="aa-tRNA-synth_I_codon-bd_sub2"/>
</dbReference>
<dbReference type="InterPro" id="IPR001412">
    <property type="entry name" value="aa-tRNA-synth_I_CS"/>
</dbReference>
<dbReference type="InterPro" id="IPR008925">
    <property type="entry name" value="aa_tRNA-synth_I_cd-bd_sf"/>
</dbReference>
<dbReference type="InterPro" id="IPR004527">
    <property type="entry name" value="Glu-tRNA-ligase_bac/mito"/>
</dbReference>
<dbReference type="InterPro" id="IPR000924">
    <property type="entry name" value="Glu/Gln-tRNA-synth"/>
</dbReference>
<dbReference type="InterPro" id="IPR020058">
    <property type="entry name" value="Glu/Gln-tRNA-synth_Ib_cat-dom"/>
</dbReference>
<dbReference type="InterPro" id="IPR049940">
    <property type="entry name" value="GluQ/Sye"/>
</dbReference>
<dbReference type="InterPro" id="IPR033910">
    <property type="entry name" value="GluRS_core"/>
</dbReference>
<dbReference type="InterPro" id="IPR014729">
    <property type="entry name" value="Rossmann-like_a/b/a_fold"/>
</dbReference>
<dbReference type="NCBIfam" id="TIGR00464">
    <property type="entry name" value="gltX_bact"/>
    <property type="match status" value="1"/>
</dbReference>
<dbReference type="PANTHER" id="PTHR43311">
    <property type="entry name" value="GLUTAMATE--TRNA LIGASE"/>
    <property type="match status" value="1"/>
</dbReference>
<dbReference type="PANTHER" id="PTHR43311:SF2">
    <property type="entry name" value="GLUTAMATE--TRNA LIGASE, MITOCHONDRIAL-RELATED"/>
    <property type="match status" value="1"/>
</dbReference>
<dbReference type="Pfam" id="PF19269">
    <property type="entry name" value="Anticodon_2"/>
    <property type="match status" value="1"/>
</dbReference>
<dbReference type="Pfam" id="PF00749">
    <property type="entry name" value="tRNA-synt_1c"/>
    <property type="match status" value="1"/>
</dbReference>
<dbReference type="PRINTS" id="PR00987">
    <property type="entry name" value="TRNASYNTHGLU"/>
</dbReference>
<dbReference type="SUPFAM" id="SSF48163">
    <property type="entry name" value="An anticodon-binding domain of class I aminoacyl-tRNA synthetases"/>
    <property type="match status" value="1"/>
</dbReference>
<dbReference type="SUPFAM" id="SSF52374">
    <property type="entry name" value="Nucleotidylyl transferase"/>
    <property type="match status" value="1"/>
</dbReference>
<dbReference type="PROSITE" id="PS00178">
    <property type="entry name" value="AA_TRNA_LIGASE_I"/>
    <property type="match status" value="1"/>
</dbReference>
<gene>
    <name evidence="1" type="primary">gltX2</name>
    <name type="ordered locus">amb2803</name>
</gene>
<accession>Q2W3G8</accession>
<sequence length="477" mass="52538">MTVVTRFAPSPTGFLHIGGGRTALFNWLFARHHGGKFLLRIEDTDRARSTDAAVEAIFDGIKWLGLDWDGEAVMQFARACRHAEVARQLLDEGKAYRCYCTQDELTAIREEQKAKGQPMRYPGIWRDRPATDAPEGAPFVVRLKAPAEGETIIADLVQGDVRVANDQLDDMVLLRADGTPTYMLSVVVDDHDMGITHVIRGDDHLTNAFRQYQLYKACGWEVPTFAHIPLIHGPDGAKLSKRHGALGVDAYRDMGFLPEAMRNYLLRLGWSHGDDEIISTEQAVEWFTLDSVGRSPSRFDFVKLTNLNGHYMRGADDGRLTEVLVPLLEAKTGKALSGESVARLRTGMTGLKERAKTMVELADSALFYVAERPLALDEKAAKTMADETATADLAAYRTEVKELGAWTRDTLEDAARRLAEARGQKLGKIAQPLRAALAGSSVSPPIFEVMEVLGREESLGRIEDALGGTRPTTSTAA</sequence>
<keyword id="KW-0030">Aminoacyl-tRNA synthetase</keyword>
<keyword id="KW-0067">ATP-binding</keyword>
<keyword id="KW-0963">Cytoplasm</keyword>
<keyword id="KW-0436">Ligase</keyword>
<keyword id="KW-0547">Nucleotide-binding</keyword>
<keyword id="KW-0648">Protein biosynthesis</keyword>
<feature type="chain" id="PRO_0000237369" description="Glutamate--tRNA ligase 2">
    <location>
        <begin position="1"/>
        <end position="477"/>
    </location>
</feature>
<feature type="short sequence motif" description="'HIGH' region" evidence="1">
    <location>
        <begin position="9"/>
        <end position="19"/>
    </location>
</feature>
<feature type="short sequence motif" description="'KMSKS' region" evidence="1">
    <location>
        <begin position="238"/>
        <end position="242"/>
    </location>
</feature>
<feature type="binding site" evidence="1">
    <location>
        <position position="241"/>
    </location>
    <ligand>
        <name>ATP</name>
        <dbReference type="ChEBI" id="CHEBI:30616"/>
    </ligand>
</feature>
<comment type="function">
    <text evidence="1">Catalyzes the attachment of glutamate to tRNA(Glu) in a two-step reaction: glutamate is first activated by ATP to form Glu-AMP and then transferred to the acceptor end of tRNA(Glu).</text>
</comment>
<comment type="catalytic activity">
    <reaction evidence="1">
        <text>tRNA(Glu) + L-glutamate + ATP = L-glutamyl-tRNA(Glu) + AMP + diphosphate</text>
        <dbReference type="Rhea" id="RHEA:23540"/>
        <dbReference type="Rhea" id="RHEA-COMP:9663"/>
        <dbReference type="Rhea" id="RHEA-COMP:9680"/>
        <dbReference type="ChEBI" id="CHEBI:29985"/>
        <dbReference type="ChEBI" id="CHEBI:30616"/>
        <dbReference type="ChEBI" id="CHEBI:33019"/>
        <dbReference type="ChEBI" id="CHEBI:78442"/>
        <dbReference type="ChEBI" id="CHEBI:78520"/>
        <dbReference type="ChEBI" id="CHEBI:456215"/>
        <dbReference type="EC" id="6.1.1.17"/>
    </reaction>
</comment>
<comment type="subunit">
    <text evidence="1">Monomer.</text>
</comment>
<comment type="subcellular location">
    <subcellularLocation>
        <location evidence="1">Cytoplasm</location>
    </subcellularLocation>
</comment>
<comment type="similarity">
    <text evidence="1">Belongs to the class-I aminoacyl-tRNA synthetase family. Glutamate--tRNA ligase type 1 subfamily.</text>
</comment>
<organism>
    <name type="scientific">Paramagnetospirillum magneticum (strain ATCC 700264 / AMB-1)</name>
    <name type="common">Magnetospirillum magneticum</name>
    <dbReference type="NCBI Taxonomy" id="342108"/>
    <lineage>
        <taxon>Bacteria</taxon>
        <taxon>Pseudomonadati</taxon>
        <taxon>Pseudomonadota</taxon>
        <taxon>Alphaproteobacteria</taxon>
        <taxon>Rhodospirillales</taxon>
        <taxon>Magnetospirillaceae</taxon>
        <taxon>Paramagnetospirillum</taxon>
    </lineage>
</organism>